<evidence type="ECO:0000250" key="1"/>
<evidence type="ECO:0000305" key="2"/>
<protein>
    <recommendedName>
        <fullName>Probable malate dehydrogenase 3</fullName>
        <ecNumber>1.1.1.37</ecNumber>
    </recommendedName>
</protein>
<proteinExistence type="inferred from homology"/>
<organism>
    <name type="scientific">Dictyostelium discoideum</name>
    <name type="common">Social amoeba</name>
    <dbReference type="NCBI Taxonomy" id="44689"/>
    <lineage>
        <taxon>Eukaryota</taxon>
        <taxon>Amoebozoa</taxon>
        <taxon>Evosea</taxon>
        <taxon>Eumycetozoa</taxon>
        <taxon>Dictyostelia</taxon>
        <taxon>Dictyosteliales</taxon>
        <taxon>Dictyosteliaceae</taxon>
        <taxon>Dictyostelium</taxon>
    </lineage>
</organism>
<comment type="function">
    <text evidence="1">Catalyzes the reversible oxidation of malate to oxaloacetate.</text>
</comment>
<comment type="catalytic activity">
    <reaction>
        <text>(S)-malate + NAD(+) = oxaloacetate + NADH + H(+)</text>
        <dbReference type="Rhea" id="RHEA:21432"/>
        <dbReference type="ChEBI" id="CHEBI:15378"/>
        <dbReference type="ChEBI" id="CHEBI:15589"/>
        <dbReference type="ChEBI" id="CHEBI:16452"/>
        <dbReference type="ChEBI" id="CHEBI:57540"/>
        <dbReference type="ChEBI" id="CHEBI:57945"/>
        <dbReference type="EC" id="1.1.1.37"/>
    </reaction>
</comment>
<comment type="subunit">
    <text evidence="1">Homodimer.</text>
</comment>
<comment type="similarity">
    <text evidence="2">Belongs to the LDH/MDH superfamily. MDH type 2 family.</text>
</comment>
<reference key="1">
    <citation type="journal article" date="2005" name="Nature">
        <title>The genome of the social amoeba Dictyostelium discoideum.</title>
        <authorList>
            <person name="Eichinger L."/>
            <person name="Pachebat J.A."/>
            <person name="Gloeckner G."/>
            <person name="Rajandream M.A."/>
            <person name="Sucgang R."/>
            <person name="Berriman M."/>
            <person name="Song J."/>
            <person name="Olsen R."/>
            <person name="Szafranski K."/>
            <person name="Xu Q."/>
            <person name="Tunggal B."/>
            <person name="Kummerfeld S."/>
            <person name="Madera M."/>
            <person name="Konfortov B.A."/>
            <person name="Rivero F."/>
            <person name="Bankier A.T."/>
            <person name="Lehmann R."/>
            <person name="Hamlin N."/>
            <person name="Davies R."/>
            <person name="Gaudet P."/>
            <person name="Fey P."/>
            <person name="Pilcher K."/>
            <person name="Chen G."/>
            <person name="Saunders D."/>
            <person name="Sodergren E.J."/>
            <person name="Davis P."/>
            <person name="Kerhornou A."/>
            <person name="Nie X."/>
            <person name="Hall N."/>
            <person name="Anjard C."/>
            <person name="Hemphill L."/>
            <person name="Bason N."/>
            <person name="Farbrother P."/>
            <person name="Desany B."/>
            <person name="Just E."/>
            <person name="Morio T."/>
            <person name="Rost R."/>
            <person name="Churcher C.M."/>
            <person name="Cooper J."/>
            <person name="Haydock S."/>
            <person name="van Driessche N."/>
            <person name="Cronin A."/>
            <person name="Goodhead I."/>
            <person name="Muzny D.M."/>
            <person name="Mourier T."/>
            <person name="Pain A."/>
            <person name="Lu M."/>
            <person name="Harper D."/>
            <person name="Lindsay R."/>
            <person name="Hauser H."/>
            <person name="James K.D."/>
            <person name="Quiles M."/>
            <person name="Madan Babu M."/>
            <person name="Saito T."/>
            <person name="Buchrieser C."/>
            <person name="Wardroper A."/>
            <person name="Felder M."/>
            <person name="Thangavelu M."/>
            <person name="Johnson D."/>
            <person name="Knights A."/>
            <person name="Loulseged H."/>
            <person name="Mungall K.L."/>
            <person name="Oliver K."/>
            <person name="Price C."/>
            <person name="Quail M.A."/>
            <person name="Urushihara H."/>
            <person name="Hernandez J."/>
            <person name="Rabbinowitsch E."/>
            <person name="Steffen D."/>
            <person name="Sanders M."/>
            <person name="Ma J."/>
            <person name="Kohara Y."/>
            <person name="Sharp S."/>
            <person name="Simmonds M.N."/>
            <person name="Spiegler S."/>
            <person name="Tivey A."/>
            <person name="Sugano S."/>
            <person name="White B."/>
            <person name="Walker D."/>
            <person name="Woodward J.R."/>
            <person name="Winckler T."/>
            <person name="Tanaka Y."/>
            <person name="Shaulsky G."/>
            <person name="Schleicher M."/>
            <person name="Weinstock G.M."/>
            <person name="Rosenthal A."/>
            <person name="Cox E.C."/>
            <person name="Chisholm R.L."/>
            <person name="Gibbs R.A."/>
            <person name="Loomis W.F."/>
            <person name="Platzer M."/>
            <person name="Kay R.R."/>
            <person name="Williams J.G."/>
            <person name="Dear P.H."/>
            <person name="Noegel A.A."/>
            <person name="Barrell B.G."/>
            <person name="Kuspa A."/>
        </authorList>
    </citation>
    <scope>NUCLEOTIDE SEQUENCE [LARGE SCALE GENOMIC DNA]</scope>
    <source>
        <strain>AX4</strain>
    </source>
</reference>
<keyword id="KW-0520">NAD</keyword>
<keyword id="KW-0560">Oxidoreductase</keyword>
<keyword id="KW-1185">Reference proteome</keyword>
<keyword id="KW-0816">Tricarboxylic acid cycle</keyword>
<gene>
    <name type="primary">mdhC</name>
    <name type="ORF">DDB_G0280255</name>
</gene>
<name>MDHC_DICDI</name>
<feature type="chain" id="PRO_0000312366" description="Probable malate dehydrogenase 3">
    <location>
        <begin position="1"/>
        <end position="333"/>
    </location>
</feature>
<feature type="active site" description="Proton acceptor" evidence="1">
    <location>
        <position position="188"/>
    </location>
</feature>
<feature type="binding site" evidence="1">
    <location>
        <begin position="12"/>
        <end position="18"/>
    </location>
    <ligand>
        <name>NAD(+)</name>
        <dbReference type="ChEBI" id="CHEBI:57540"/>
    </ligand>
</feature>
<feature type="binding site" evidence="1">
    <location>
        <position position="93"/>
    </location>
    <ligand>
        <name>substrate</name>
    </ligand>
</feature>
<feature type="binding site" evidence="1">
    <location>
        <position position="99"/>
    </location>
    <ligand>
        <name>substrate</name>
    </ligand>
</feature>
<feature type="binding site" evidence="1">
    <location>
        <position position="106"/>
    </location>
    <ligand>
        <name>NAD(+)</name>
        <dbReference type="ChEBI" id="CHEBI:57540"/>
    </ligand>
</feature>
<feature type="binding site" evidence="1">
    <location>
        <position position="113"/>
    </location>
    <ligand>
        <name>NAD(+)</name>
        <dbReference type="ChEBI" id="CHEBI:57540"/>
    </ligand>
</feature>
<feature type="binding site" evidence="1">
    <location>
        <begin position="130"/>
        <end position="132"/>
    </location>
    <ligand>
        <name>NAD(+)</name>
        <dbReference type="ChEBI" id="CHEBI:57540"/>
    </ligand>
</feature>
<feature type="binding site" evidence="1">
    <location>
        <position position="132"/>
    </location>
    <ligand>
        <name>substrate</name>
    </ligand>
</feature>
<feature type="binding site" evidence="1">
    <location>
        <position position="163"/>
    </location>
    <ligand>
        <name>substrate</name>
    </ligand>
</feature>
<accession>Q54VM2</accession>
<sequence>MSNEVINVLITGAAGQIAYSLIFNVCKGDMFGLDQRIKLHLLDIPQMVDSLKGIVMEIQDGAYPLIADTVITADVKEAFTGVHYAILVGAMPRREGMERADLLKANAAIFKVQGKALAEHANKNVKVLVVGNPANTNALIAQVSANGIPKENFTCLTRLDQNRAKSQIALKAGVNVKDVHNVIIWGNHSSTQYPDYRCGYINLSTGKTPISTAIKDEKWLQGEFISTVQKRGAAVIAARKLSSAASAAKAITDHMHDWVLGTAEGEYVSMGVYSDGSYGVPEGLIFSFPVKCANGKYTIVQGLQMDDLSKNLINLTTEELVAEKTTALQFLSE</sequence>
<dbReference type="EC" id="1.1.1.37"/>
<dbReference type="EMBL" id="AAFI02000035">
    <property type="protein sequence ID" value="EAL67354.1"/>
    <property type="molecule type" value="Genomic_DNA"/>
</dbReference>
<dbReference type="RefSeq" id="XP_641333.1">
    <property type="nucleotide sequence ID" value="XM_636241.1"/>
</dbReference>
<dbReference type="SMR" id="Q54VM2"/>
<dbReference type="FunCoup" id="Q54VM2">
    <property type="interactions" value="527"/>
</dbReference>
<dbReference type="STRING" id="44689.Q54VM2"/>
<dbReference type="PaxDb" id="44689-DDB0230187"/>
<dbReference type="EnsemblProtists" id="EAL67354">
    <property type="protein sequence ID" value="EAL67354"/>
    <property type="gene ID" value="DDB_G0280255"/>
</dbReference>
<dbReference type="GeneID" id="8622467"/>
<dbReference type="KEGG" id="ddi:DDB_G0280255"/>
<dbReference type="dictyBase" id="DDB_G0280255">
    <property type="gene designation" value="mdhC"/>
</dbReference>
<dbReference type="VEuPathDB" id="AmoebaDB:DDB_G0280255"/>
<dbReference type="eggNOG" id="KOG1496">
    <property type="taxonomic scope" value="Eukaryota"/>
</dbReference>
<dbReference type="HOGENOM" id="CLU_040727_2_0_1"/>
<dbReference type="InParanoid" id="Q54VM2"/>
<dbReference type="OMA" id="GMIGSNM"/>
<dbReference type="PhylomeDB" id="Q54VM2"/>
<dbReference type="PRO" id="PR:Q54VM2"/>
<dbReference type="Proteomes" id="UP000002195">
    <property type="component" value="Chromosome 3"/>
</dbReference>
<dbReference type="GO" id="GO:0030060">
    <property type="term" value="F:L-malate dehydrogenase (NAD+) activity"/>
    <property type="evidence" value="ECO:0000318"/>
    <property type="project" value="GO_Central"/>
</dbReference>
<dbReference type="GO" id="GO:0006108">
    <property type="term" value="P:malate metabolic process"/>
    <property type="evidence" value="ECO:0000318"/>
    <property type="project" value="GO_Central"/>
</dbReference>
<dbReference type="GO" id="GO:0006734">
    <property type="term" value="P:NADH metabolic process"/>
    <property type="evidence" value="ECO:0000318"/>
    <property type="project" value="GO_Central"/>
</dbReference>
<dbReference type="GO" id="GO:0006107">
    <property type="term" value="P:oxaloacetate metabolic process"/>
    <property type="evidence" value="ECO:0000318"/>
    <property type="project" value="GO_Central"/>
</dbReference>
<dbReference type="GO" id="GO:0006099">
    <property type="term" value="P:tricarboxylic acid cycle"/>
    <property type="evidence" value="ECO:0000318"/>
    <property type="project" value="GO_Central"/>
</dbReference>
<dbReference type="CDD" id="cd01336">
    <property type="entry name" value="MDH_cytoplasmic_cytosolic"/>
    <property type="match status" value="1"/>
</dbReference>
<dbReference type="FunFam" id="3.40.50.720:FF:000010">
    <property type="entry name" value="Malate dehydrogenase"/>
    <property type="match status" value="1"/>
</dbReference>
<dbReference type="FunFam" id="3.90.110.10:FF:000002">
    <property type="entry name" value="Malate dehydrogenase"/>
    <property type="match status" value="1"/>
</dbReference>
<dbReference type="Gene3D" id="3.90.110.10">
    <property type="entry name" value="Lactate dehydrogenase/glycoside hydrolase, family 4, C-terminal"/>
    <property type="match status" value="1"/>
</dbReference>
<dbReference type="Gene3D" id="3.40.50.720">
    <property type="entry name" value="NAD(P)-binding Rossmann-like Domain"/>
    <property type="match status" value="1"/>
</dbReference>
<dbReference type="HAMAP" id="MF_01517">
    <property type="entry name" value="Malate_dehydrog_2"/>
    <property type="match status" value="1"/>
</dbReference>
<dbReference type="InterPro" id="IPR001557">
    <property type="entry name" value="L-lactate/malate_DH"/>
</dbReference>
<dbReference type="InterPro" id="IPR022383">
    <property type="entry name" value="Lactate/malate_DH_C"/>
</dbReference>
<dbReference type="InterPro" id="IPR001236">
    <property type="entry name" value="Lactate/malate_DH_N"/>
</dbReference>
<dbReference type="InterPro" id="IPR015955">
    <property type="entry name" value="Lactate_DH/Glyco_Ohase_4_C"/>
</dbReference>
<dbReference type="InterPro" id="IPR001252">
    <property type="entry name" value="Malate_DH_AS"/>
</dbReference>
<dbReference type="InterPro" id="IPR011274">
    <property type="entry name" value="Malate_DH_NAD-dep_euk"/>
</dbReference>
<dbReference type="InterPro" id="IPR010945">
    <property type="entry name" value="Malate_DH_type2"/>
</dbReference>
<dbReference type="InterPro" id="IPR036291">
    <property type="entry name" value="NAD(P)-bd_dom_sf"/>
</dbReference>
<dbReference type="NCBIfam" id="TIGR01759">
    <property type="entry name" value="MalateDH-SF1"/>
    <property type="match status" value="1"/>
</dbReference>
<dbReference type="NCBIfam" id="TIGR01758">
    <property type="entry name" value="MDH_euk_cyt"/>
    <property type="match status" value="1"/>
</dbReference>
<dbReference type="NCBIfam" id="NF003916">
    <property type="entry name" value="PRK05442.1"/>
    <property type="match status" value="1"/>
</dbReference>
<dbReference type="PANTHER" id="PTHR23382">
    <property type="entry name" value="MALATE DEHYDROGENASE"/>
    <property type="match status" value="1"/>
</dbReference>
<dbReference type="Pfam" id="PF02866">
    <property type="entry name" value="Ldh_1_C"/>
    <property type="match status" value="1"/>
</dbReference>
<dbReference type="Pfam" id="PF00056">
    <property type="entry name" value="Ldh_1_N"/>
    <property type="match status" value="1"/>
</dbReference>
<dbReference type="PIRSF" id="PIRSF000102">
    <property type="entry name" value="Lac_mal_DH"/>
    <property type="match status" value="1"/>
</dbReference>
<dbReference type="SUPFAM" id="SSF56327">
    <property type="entry name" value="LDH C-terminal domain-like"/>
    <property type="match status" value="1"/>
</dbReference>
<dbReference type="SUPFAM" id="SSF51735">
    <property type="entry name" value="NAD(P)-binding Rossmann-fold domains"/>
    <property type="match status" value="1"/>
</dbReference>
<dbReference type="PROSITE" id="PS00068">
    <property type="entry name" value="MDH"/>
    <property type="match status" value="1"/>
</dbReference>